<keyword id="KW-0328">Glycosyltransferase</keyword>
<keyword id="KW-0808">Transferase</keyword>
<accession>B5FN88</accession>
<proteinExistence type="inferred from homology"/>
<dbReference type="EC" id="2.4.1.180" evidence="1"/>
<dbReference type="EMBL" id="CP001144">
    <property type="protein sequence ID" value="ACH77501.1"/>
    <property type="molecule type" value="Genomic_DNA"/>
</dbReference>
<dbReference type="RefSeq" id="WP_000183621.1">
    <property type="nucleotide sequence ID" value="NC_011205.1"/>
</dbReference>
<dbReference type="SMR" id="B5FN88"/>
<dbReference type="CAZy" id="GT26">
    <property type="family name" value="Glycosyltransferase Family 26"/>
</dbReference>
<dbReference type="KEGG" id="sed:SeD_A4317"/>
<dbReference type="HOGENOM" id="CLU_063203_3_2_6"/>
<dbReference type="UniPathway" id="UPA00566"/>
<dbReference type="Proteomes" id="UP000008322">
    <property type="component" value="Chromosome"/>
</dbReference>
<dbReference type="GO" id="GO:0047241">
    <property type="term" value="F:lipopolysaccharide N-acetylmannosaminouronosyltransferase activity"/>
    <property type="evidence" value="ECO:0007669"/>
    <property type="project" value="UniProtKB-UniRule"/>
</dbReference>
<dbReference type="GO" id="GO:0009246">
    <property type="term" value="P:enterobacterial common antigen biosynthetic process"/>
    <property type="evidence" value="ECO:0007669"/>
    <property type="project" value="UniProtKB-UniRule"/>
</dbReference>
<dbReference type="CDD" id="cd06533">
    <property type="entry name" value="Glyco_transf_WecG_TagA"/>
    <property type="match status" value="1"/>
</dbReference>
<dbReference type="HAMAP" id="MF_01001">
    <property type="entry name" value="WecG_RffM"/>
    <property type="match status" value="1"/>
</dbReference>
<dbReference type="InterPro" id="IPR023085">
    <property type="entry name" value="UDP-ManNAcA_Trfase_WecG"/>
</dbReference>
<dbReference type="InterPro" id="IPR004629">
    <property type="entry name" value="WecG_TagA_CpsF"/>
</dbReference>
<dbReference type="NCBIfam" id="NF002980">
    <property type="entry name" value="PRK03692.1"/>
    <property type="match status" value="1"/>
</dbReference>
<dbReference type="NCBIfam" id="TIGR00696">
    <property type="entry name" value="wecG_tagA_cpsF"/>
    <property type="match status" value="1"/>
</dbReference>
<dbReference type="PANTHER" id="PTHR34136">
    <property type="match status" value="1"/>
</dbReference>
<dbReference type="PANTHER" id="PTHR34136:SF1">
    <property type="entry name" value="UDP-N-ACETYL-D-MANNOSAMINURONIC ACID TRANSFERASE"/>
    <property type="match status" value="1"/>
</dbReference>
<dbReference type="Pfam" id="PF03808">
    <property type="entry name" value="Glyco_tran_WecG"/>
    <property type="match status" value="1"/>
</dbReference>
<feature type="chain" id="PRO_1000134583" description="UDP-N-acetyl-D-mannosaminuronic acid transferase">
    <location>
        <begin position="1"/>
        <end position="246"/>
    </location>
</feature>
<sequence>MTNNAAAPLYSLRGLPLIGWRDMSHALNYLFADGQLKQGTLVAINAEKLLTAEDNPEVRALIAAAEFKYADGISVVRSIRKKFPQAQVSRVAGADLWEALMARAGKEGTPVFLVGGKPEVLAQTEAKLRTQWNVNIVGSQDGYFTPEQRQALFARIHASGAKIVTVAMGSPKQELLMRDCREVHPHALYMGVGGTYDVFTGHVKRAPKIWQNLGLEWLYRLLSQPRRITRQMRLLRYLRWHYTGDL</sequence>
<comment type="function">
    <text evidence="1">Catalyzes the synthesis of Und-PP-GlcNAc-ManNAcA (Lipid II), the second lipid-linked intermediate involved in enterobacterial common antigen (ECA) synthesis.</text>
</comment>
<comment type="catalytic activity">
    <reaction evidence="1">
        <text>UDP-N-acetyl-alpha-D-mannosaminouronate + N-acetyl-alpha-D-glucosaminyl-di-trans,octa-cis-undecaprenyl diphosphate = beta-D-ManNAcA-(1-&gt;4)-alpha-D-GlcNAc-di-trans,octa-cis-undecaprenyl diphosphate + UDP + H(+)</text>
        <dbReference type="Rhea" id="RHEA:28366"/>
        <dbReference type="ChEBI" id="CHEBI:15378"/>
        <dbReference type="ChEBI" id="CHEBI:58223"/>
        <dbReference type="ChEBI" id="CHEBI:61495"/>
        <dbReference type="ChEBI" id="CHEBI:62959"/>
        <dbReference type="ChEBI" id="CHEBI:70731"/>
        <dbReference type="EC" id="2.4.1.180"/>
    </reaction>
</comment>
<comment type="pathway">
    <text evidence="1">Bacterial outer membrane biogenesis; enterobacterial common antigen biosynthesis.</text>
</comment>
<comment type="similarity">
    <text evidence="1">Belongs to the glycosyltransferase 26 family.</text>
</comment>
<evidence type="ECO:0000255" key="1">
    <source>
        <dbReference type="HAMAP-Rule" id="MF_01001"/>
    </source>
</evidence>
<gene>
    <name evidence="1" type="primary">wecG</name>
    <name evidence="1" type="synonym">rffM</name>
    <name type="ordered locus">SeD_A4317</name>
</gene>
<reference key="1">
    <citation type="journal article" date="2011" name="J. Bacteriol.">
        <title>Comparative genomics of 28 Salmonella enterica isolates: evidence for CRISPR-mediated adaptive sublineage evolution.</title>
        <authorList>
            <person name="Fricke W.F."/>
            <person name="Mammel M.K."/>
            <person name="McDermott P.F."/>
            <person name="Tartera C."/>
            <person name="White D.G."/>
            <person name="Leclerc J.E."/>
            <person name="Ravel J."/>
            <person name="Cebula T.A."/>
        </authorList>
    </citation>
    <scope>NUCLEOTIDE SEQUENCE [LARGE SCALE GENOMIC DNA]</scope>
    <source>
        <strain>CT_02021853</strain>
    </source>
</reference>
<name>WECG_SALDC</name>
<protein>
    <recommendedName>
        <fullName evidence="1">UDP-N-acetyl-D-mannosaminuronic acid transferase</fullName>
        <shortName evidence="1">UDP-ManNAcA transferase</shortName>
        <ecNumber evidence="1">2.4.1.180</ecNumber>
    </recommendedName>
</protein>
<organism>
    <name type="scientific">Salmonella dublin (strain CT_02021853)</name>
    <dbReference type="NCBI Taxonomy" id="439851"/>
    <lineage>
        <taxon>Bacteria</taxon>
        <taxon>Pseudomonadati</taxon>
        <taxon>Pseudomonadota</taxon>
        <taxon>Gammaproteobacteria</taxon>
        <taxon>Enterobacterales</taxon>
        <taxon>Enterobacteriaceae</taxon>
        <taxon>Salmonella</taxon>
    </lineage>
</organism>